<reference key="1">
    <citation type="journal article" date="1996" name="Biochem. J.">
        <title>Identification of a nuclear-specific cyclophilin which interacts with the proteinase inhibitor eglin c.</title>
        <authorList>
            <person name="Wang B.B."/>
            <person name="Hayenga K.J."/>
            <person name="Payan D.G."/>
            <person name="Fisher J.M."/>
        </authorList>
    </citation>
    <scope>NUCLEOTIDE SEQUENCE [MRNA] (ISOFORM 1)</scope>
    <scope>SUBCELLULAR LOCATION</scope>
    <scope>TISSUE SPECIFICITY</scope>
    <source>
        <tissue>Lymphocyte</tissue>
    </source>
</reference>
<reference key="2">
    <citation type="journal article" date="2004" name="Genome Biol.">
        <title>A genome annotation-driven approach to cloning the human ORFeome.</title>
        <authorList>
            <person name="Collins J.E."/>
            <person name="Wright C.L."/>
            <person name="Edwards C.A."/>
            <person name="Davis M.P."/>
            <person name="Grinham J.A."/>
            <person name="Cole C.G."/>
            <person name="Goward M.E."/>
            <person name="Aguado B."/>
            <person name="Mallya M."/>
            <person name="Mokrab Y."/>
            <person name="Huckle E.J."/>
            <person name="Beare D.M."/>
            <person name="Dunham I."/>
        </authorList>
    </citation>
    <scope>NUCLEOTIDE SEQUENCE [LARGE SCALE MRNA] (ISOFORM 1)</scope>
</reference>
<reference key="3">
    <citation type="journal article" date="2004" name="Genome Res.">
        <title>The status, quality, and expansion of the NIH full-length cDNA project: the Mammalian Gene Collection (MGC).</title>
        <authorList>
            <consortium name="The MGC Project Team"/>
        </authorList>
    </citation>
    <scope>NUCLEOTIDE SEQUENCE [LARGE SCALE MRNA] (ISOFORMS 1 AND 2)</scope>
    <source>
        <tissue>Hippocampus</tissue>
        <tissue>Kidney</tissue>
    </source>
</reference>
<reference key="4">
    <citation type="journal article" date="2001" name="J. Biol. Chem.">
        <title>U box proteins as a new family of ubiquitin-protein ligases.</title>
        <authorList>
            <person name="Hatakeyama S."/>
            <person name="Yada M."/>
            <person name="Matsumoto M."/>
            <person name="Ishida N."/>
            <person name="Nakayama K.I."/>
        </authorList>
    </citation>
    <scope>FUNCTION</scope>
    <scope>CATALYTIC ACTIVITY</scope>
    <scope>PATHWAY</scope>
    <scope>SUBCELLULAR LOCATION</scope>
    <scope>TISSUE SPECIFICITY</scope>
</reference>
<reference key="5">
    <citation type="journal article" date="2004" name="Genes Cells">
        <title>Interaction of U-box-type ubiquitin-protein ligases (E3s) with molecular chaperones.</title>
        <authorList>
            <person name="Hatakeyama S."/>
            <person name="Matsumoto M."/>
            <person name="Yada M."/>
            <person name="Nakayama K.I."/>
        </authorList>
    </citation>
    <scope>INTERACTION WITH CRNKL1 AND HSP90</scope>
</reference>
<reference key="6">
    <citation type="journal article" date="2005" name="J. Biol. Chem.">
        <title>Cell surface expression of CD147/EMMPRIN is regulated by cyclophilin 60.</title>
        <authorList>
            <person name="Pushkarsky T."/>
            <person name="Yurchenko V."/>
            <person name="Vanpouille C."/>
            <person name="Brichacek B."/>
            <person name="Vaisman I."/>
            <person name="Hatakeyama S."/>
            <person name="Nakayama K.I."/>
            <person name="Sherry B."/>
            <person name="Bukrinsky M.I."/>
        </authorList>
    </citation>
    <scope>FUNCTION</scope>
    <scope>INTERACTION WITH BSG</scope>
    <scope>SUBCELLULAR LOCATION</scope>
</reference>
<reference key="7">
    <citation type="journal article" date="2009" name="Science">
        <title>Lysine acetylation targets protein complexes and co-regulates major cellular functions.</title>
        <authorList>
            <person name="Choudhary C."/>
            <person name="Kumar C."/>
            <person name="Gnad F."/>
            <person name="Nielsen M.L."/>
            <person name="Rehman M."/>
            <person name="Walther T.C."/>
            <person name="Olsen J.V."/>
            <person name="Mann M."/>
        </authorList>
    </citation>
    <scope>ACETYLATION [LARGE SCALE ANALYSIS] AT LYS-482</scope>
    <scope>IDENTIFICATION BY MASS SPECTROMETRY [LARGE SCALE ANALYSIS]</scope>
</reference>
<reference key="8">
    <citation type="journal article" date="2011" name="BMC Syst. Biol.">
        <title>Initial characterization of the human central proteome.</title>
        <authorList>
            <person name="Burkard T.R."/>
            <person name="Planyavsky M."/>
            <person name="Kaupe I."/>
            <person name="Breitwieser F.P."/>
            <person name="Buerckstuemmer T."/>
            <person name="Bennett K.L."/>
            <person name="Superti-Furga G."/>
            <person name="Colinge J."/>
        </authorList>
    </citation>
    <scope>IDENTIFICATION BY MASS SPECTROMETRY [LARGE SCALE ANALYSIS]</scope>
</reference>
<reference key="9">
    <citation type="journal article" date="2013" name="J. Proteome Res.">
        <title>Toward a comprehensive characterization of a human cancer cell phosphoproteome.</title>
        <authorList>
            <person name="Zhou H."/>
            <person name="Di Palma S."/>
            <person name="Preisinger C."/>
            <person name="Peng M."/>
            <person name="Polat A.N."/>
            <person name="Heck A.J."/>
            <person name="Mohammed S."/>
        </authorList>
    </citation>
    <scope>PHOSPHORYLATION [LARGE SCALE ANALYSIS] AT SER-470</scope>
    <scope>IDENTIFICATION BY MASS SPECTROMETRY [LARGE SCALE ANALYSIS]</scope>
    <source>
        <tissue>Erythroleukemia</tissue>
    </source>
</reference>
<reference key="10">
    <citation type="journal article" date="2017" name="Nat. Struct. Mol. Biol.">
        <title>Site-specific mapping of the human SUMO proteome reveals co-modification with phosphorylation.</title>
        <authorList>
            <person name="Hendriks I.A."/>
            <person name="Lyon D."/>
            <person name="Young C."/>
            <person name="Jensen L.J."/>
            <person name="Vertegaal A.C."/>
            <person name="Nielsen M.L."/>
        </authorList>
    </citation>
    <scope>SUMOYLATION [LARGE SCALE ANALYSIS] AT LYS-216</scope>
    <scope>IDENTIFICATION BY MASS SPECTROMETRY [LARGE SCALE ANALYSIS]</scope>
</reference>
<reference evidence="18" key="11">
    <citation type="journal article" date="2021" name="Science">
        <title>Structure of the activated human minor spliceosome.</title>
        <authorList>
            <person name="Bai R."/>
            <person name="Wan R."/>
            <person name="Wang L."/>
            <person name="Xu K."/>
            <person name="Zhang Q."/>
            <person name="Lei J."/>
            <person name="Shi Y."/>
        </authorList>
    </citation>
    <scope>STRUCTURE BY ELECTRON MICROSCOPY (2.89 ANGSTROMS)</scope>
    <scope>FUNCTION</scope>
    <scope>SUBUNIT</scope>
</reference>
<reference key="12">
    <citation type="submission" date="2006-01" db="PDB data bank">
        <title>Crystal structure of the human peptidylprolyl isomerase-like 2 isoform B.</title>
        <authorList>
            <consortium name="Structural genomics consortium (SGC)"/>
        </authorList>
    </citation>
    <scope>X-RAY CRYSTALLOGRAPHY (1.65 ANGSTROMS) OF 280-457</scope>
</reference>
<reference evidence="17" key="13">
    <citation type="journal article" date="2010" name="PLoS Biol.">
        <title>Structural and biochemical characterization of the human cyclophilin family of peptidyl-prolyl isomerases.</title>
        <authorList>
            <person name="Davis T.L."/>
            <person name="Walker J.R."/>
            <person name="Campagna-Slater V."/>
            <person name="Finerty P.J."/>
            <person name="Paramanathan R."/>
            <person name="Bernstein G."/>
            <person name="MacKenzie F."/>
            <person name="Tempel W."/>
            <person name="Ouyang H."/>
            <person name="Lee W.H."/>
            <person name="Eisenmesser E.Z."/>
            <person name="Dhe-Paganon S."/>
        </authorList>
    </citation>
    <scope>X-RAY CRYSTALLOGRAPHY (1.65 ANGSTROMS) OF 280-457</scope>
    <scope>FUNCTION</scope>
    <scope>CAUTION</scope>
    <scope>MUTAGENESIS OF TYR-389</scope>
</reference>
<organism>
    <name type="scientific">Homo sapiens</name>
    <name type="common">Human</name>
    <dbReference type="NCBI Taxonomy" id="9606"/>
    <lineage>
        <taxon>Eukaryota</taxon>
        <taxon>Metazoa</taxon>
        <taxon>Chordata</taxon>
        <taxon>Craniata</taxon>
        <taxon>Vertebrata</taxon>
        <taxon>Euteleostomi</taxon>
        <taxon>Mammalia</taxon>
        <taxon>Eutheria</taxon>
        <taxon>Euarchontoglires</taxon>
        <taxon>Primates</taxon>
        <taxon>Haplorrhini</taxon>
        <taxon>Catarrhini</taxon>
        <taxon>Hominidae</taxon>
        <taxon>Homo</taxon>
    </lineage>
</organism>
<name>PPIL2_HUMAN</name>
<dbReference type="EC" id="2.3.2.27" evidence="4"/>
<dbReference type="EMBL" id="U37219">
    <property type="protein sequence ID" value="AAC50376.1"/>
    <property type="molecule type" value="mRNA"/>
</dbReference>
<dbReference type="EMBL" id="U37220">
    <property type="protein sequence ID" value="AAC50377.1"/>
    <property type="molecule type" value="mRNA"/>
</dbReference>
<dbReference type="EMBL" id="U37221">
    <property type="protein sequence ID" value="AAC50378.1"/>
    <property type="molecule type" value="mRNA"/>
</dbReference>
<dbReference type="EMBL" id="CR456548">
    <property type="protein sequence ID" value="CAG30434.1"/>
    <property type="molecule type" value="mRNA"/>
</dbReference>
<dbReference type="EMBL" id="BC028385">
    <property type="protein sequence ID" value="AAH28385.1"/>
    <property type="molecule type" value="mRNA"/>
</dbReference>
<dbReference type="EMBL" id="BC000022">
    <property type="protein sequence ID" value="AAH00022.1"/>
    <property type="molecule type" value="mRNA"/>
</dbReference>
<dbReference type="CCDS" id="CCDS13793.1">
    <molecule id="Q13356-1"/>
</dbReference>
<dbReference type="CCDS" id="CCDS46670.1">
    <molecule id="Q13356-2"/>
</dbReference>
<dbReference type="PIR" id="S64705">
    <property type="entry name" value="S64705"/>
</dbReference>
<dbReference type="RefSeq" id="NP_001304925.1">
    <molecule id="Q13356-1"/>
    <property type="nucleotide sequence ID" value="NM_001317996.2"/>
</dbReference>
<dbReference type="RefSeq" id="NP_055152.1">
    <molecule id="Q13356-1"/>
    <property type="nucleotide sequence ID" value="NM_014337.4"/>
</dbReference>
<dbReference type="RefSeq" id="NP_680480.1">
    <molecule id="Q13356-1"/>
    <property type="nucleotide sequence ID" value="NM_148175.3"/>
</dbReference>
<dbReference type="RefSeq" id="NP_680481.1">
    <molecule id="Q13356-2"/>
    <property type="nucleotide sequence ID" value="NM_148176.3"/>
</dbReference>
<dbReference type="RefSeq" id="XP_005261505.1">
    <property type="nucleotide sequence ID" value="XM_005261448.3"/>
</dbReference>
<dbReference type="RefSeq" id="XP_011528348.1">
    <molecule id="Q13356-1"/>
    <property type="nucleotide sequence ID" value="XM_011530046.4"/>
</dbReference>
<dbReference type="RefSeq" id="XP_011528349.1">
    <property type="nucleotide sequence ID" value="XM_011530047.2"/>
</dbReference>
<dbReference type="RefSeq" id="XP_054181383.1">
    <molecule id="Q13356-1"/>
    <property type="nucleotide sequence ID" value="XM_054325408.1"/>
</dbReference>
<dbReference type="PDB" id="1ZKC">
    <property type="method" value="X-ray"/>
    <property type="resolution" value="1.65 A"/>
    <property type="chains" value="A/B=280-457"/>
</dbReference>
<dbReference type="PDB" id="7ABI">
    <property type="method" value="EM"/>
    <property type="resolution" value="8.00 A"/>
    <property type="chains" value="t=1-520"/>
</dbReference>
<dbReference type="PDB" id="7DVQ">
    <property type="method" value="EM"/>
    <property type="resolution" value="2.89 A"/>
    <property type="chains" value="9=1-520"/>
</dbReference>
<dbReference type="PDB" id="7QTT">
    <property type="method" value="EM"/>
    <property type="resolution" value="3.10 A"/>
    <property type="chains" value="u=1-520"/>
</dbReference>
<dbReference type="PDB" id="8CH6">
    <property type="method" value="EM"/>
    <property type="resolution" value="5.90 A"/>
    <property type="chains" value="u=1-520"/>
</dbReference>
<dbReference type="PDB" id="8I0P">
    <property type="method" value="EM"/>
    <property type="resolution" value="3.40 A"/>
    <property type="chains" value="9=1-520"/>
</dbReference>
<dbReference type="PDB" id="8I0R">
    <property type="method" value="EM"/>
    <property type="resolution" value="3.00 A"/>
    <property type="chains" value="9=1-520"/>
</dbReference>
<dbReference type="PDB" id="8I0S">
    <property type="method" value="EM"/>
    <property type="resolution" value="4.20 A"/>
    <property type="chains" value="9=1-520"/>
</dbReference>
<dbReference type="PDB" id="8I0T">
    <property type="method" value="EM"/>
    <property type="resolution" value="3.00 A"/>
    <property type="chains" value="9=1-520"/>
</dbReference>
<dbReference type="PDBsum" id="1ZKC"/>
<dbReference type="PDBsum" id="7ABI"/>
<dbReference type="PDBsum" id="7DVQ"/>
<dbReference type="PDBsum" id="7QTT"/>
<dbReference type="PDBsum" id="8CH6"/>
<dbReference type="PDBsum" id="8I0P"/>
<dbReference type="PDBsum" id="8I0R"/>
<dbReference type="PDBsum" id="8I0S"/>
<dbReference type="PDBsum" id="8I0T"/>
<dbReference type="EMDB" id="EMD-11697"/>
<dbReference type="EMDB" id="EMD-14146"/>
<dbReference type="EMDB" id="EMD-16658"/>
<dbReference type="EMDB" id="EMD-30875"/>
<dbReference type="EMDB" id="EMD-35105"/>
<dbReference type="EMDB" id="EMD-35107"/>
<dbReference type="EMDB" id="EMD-35108"/>
<dbReference type="EMDB" id="EMD-35109"/>
<dbReference type="SMR" id="Q13356"/>
<dbReference type="BioGRID" id="117260">
    <property type="interactions" value="101"/>
</dbReference>
<dbReference type="FunCoup" id="Q13356">
    <property type="interactions" value="3557"/>
</dbReference>
<dbReference type="IntAct" id="Q13356">
    <property type="interactions" value="56"/>
</dbReference>
<dbReference type="MINT" id="Q13356"/>
<dbReference type="STRING" id="9606.ENSP00000486725"/>
<dbReference type="GlyGen" id="Q13356">
    <property type="glycosylation" value="1 site, 1 O-linked glycan (1 site)"/>
</dbReference>
<dbReference type="iPTMnet" id="Q13356"/>
<dbReference type="MetOSite" id="Q13356"/>
<dbReference type="PhosphoSitePlus" id="Q13356"/>
<dbReference type="BioMuta" id="PPIL2"/>
<dbReference type="DMDM" id="23813917"/>
<dbReference type="jPOST" id="Q13356"/>
<dbReference type="MassIVE" id="Q13356"/>
<dbReference type="PaxDb" id="9606-ENSP00000334553"/>
<dbReference type="PeptideAtlas" id="Q13356"/>
<dbReference type="ProteomicsDB" id="59341">
    <molecule id="Q13356-1"/>
</dbReference>
<dbReference type="ProteomicsDB" id="59342">
    <molecule id="Q13356-2"/>
</dbReference>
<dbReference type="Pumba" id="Q13356"/>
<dbReference type="Antibodypedia" id="23562">
    <property type="antibodies" value="208 antibodies from 27 providers"/>
</dbReference>
<dbReference type="DNASU" id="23759"/>
<dbReference type="Ensembl" id="ENST00000335025.12">
    <molecule id="Q13356-1"/>
    <property type="protein sequence ID" value="ENSP00000334553.7"/>
    <property type="gene ID" value="ENSG00000100023.20"/>
</dbReference>
<dbReference type="Ensembl" id="ENST00000398831.8">
    <molecule id="Q13356-1"/>
    <property type="protein sequence ID" value="ENSP00000381812.3"/>
    <property type="gene ID" value="ENSG00000100023.20"/>
</dbReference>
<dbReference type="Ensembl" id="ENST00000406385.1">
    <molecule id="Q13356-1"/>
    <property type="protein sequence ID" value="ENSP00000384299.1"/>
    <property type="gene ID" value="ENSG00000100023.20"/>
</dbReference>
<dbReference type="Ensembl" id="ENST00000626352.2">
    <molecule id="Q13356-2"/>
    <property type="protein sequence ID" value="ENSP00000486725.1"/>
    <property type="gene ID" value="ENSG00000100023.20"/>
</dbReference>
<dbReference type="Ensembl" id="ENST00000679534.1">
    <molecule id="Q13356-1"/>
    <property type="protein sequence ID" value="ENSP00000504893.1"/>
    <property type="gene ID" value="ENSG00000100023.20"/>
</dbReference>
<dbReference type="Ensembl" id="ENST00000679540.1">
    <molecule id="Q13356-1"/>
    <property type="protein sequence ID" value="ENSP00000506328.1"/>
    <property type="gene ID" value="ENSG00000100023.20"/>
</dbReference>
<dbReference type="Ensembl" id="ENST00000679795.1">
    <molecule id="Q13356-1"/>
    <property type="protein sequence ID" value="ENSP00000506144.1"/>
    <property type="gene ID" value="ENSG00000100023.20"/>
</dbReference>
<dbReference type="Ensembl" id="ENST00000680061.1">
    <molecule id="Q13356-1"/>
    <property type="protein sequence ID" value="ENSP00000505910.1"/>
    <property type="gene ID" value="ENSG00000100023.20"/>
</dbReference>
<dbReference type="Ensembl" id="ENST00000680393.1">
    <molecule id="Q13356-1"/>
    <property type="protein sequence ID" value="ENSP00000506542.1"/>
    <property type="gene ID" value="ENSG00000100023.20"/>
</dbReference>
<dbReference type="Ensembl" id="ENST00000681956.1">
    <molecule id="Q13356-1"/>
    <property type="protein sequence ID" value="ENSP00000506158.1"/>
    <property type="gene ID" value="ENSG00000100023.20"/>
</dbReference>
<dbReference type="GeneID" id="23759"/>
<dbReference type="KEGG" id="hsa:23759"/>
<dbReference type="MANE-Select" id="ENST00000398831.8">
    <property type="protein sequence ID" value="ENSP00000381812.3"/>
    <property type="RefSeq nucleotide sequence ID" value="NM_014337.4"/>
    <property type="RefSeq protein sequence ID" value="NP_055152.1"/>
</dbReference>
<dbReference type="UCSC" id="uc002zvg.5">
    <molecule id="Q13356-1"/>
    <property type="organism name" value="human"/>
</dbReference>
<dbReference type="AGR" id="HGNC:9261"/>
<dbReference type="CTD" id="23759"/>
<dbReference type="DisGeNET" id="23759"/>
<dbReference type="GeneCards" id="PPIL2"/>
<dbReference type="HGNC" id="HGNC:9261">
    <property type="gene designation" value="PPIL2"/>
</dbReference>
<dbReference type="HPA" id="ENSG00000100023">
    <property type="expression patterns" value="Low tissue specificity"/>
</dbReference>
<dbReference type="MIM" id="607588">
    <property type="type" value="gene"/>
</dbReference>
<dbReference type="neXtProt" id="NX_Q13356"/>
<dbReference type="OpenTargets" id="ENSG00000100023"/>
<dbReference type="PharmGKB" id="PA33588"/>
<dbReference type="VEuPathDB" id="HostDB:ENSG00000100023"/>
<dbReference type="eggNOG" id="KOG0883">
    <property type="taxonomic scope" value="Eukaryota"/>
</dbReference>
<dbReference type="GeneTree" id="ENSGT00940000153189"/>
<dbReference type="HOGENOM" id="CLU_012062_7_0_1"/>
<dbReference type="InParanoid" id="Q13356"/>
<dbReference type="OMA" id="NFIKHCA"/>
<dbReference type="OrthoDB" id="30774at2759"/>
<dbReference type="PAN-GO" id="Q13356">
    <property type="GO annotations" value="3 GO annotations based on evolutionary models"/>
</dbReference>
<dbReference type="PhylomeDB" id="Q13356"/>
<dbReference type="TreeFam" id="TF300854"/>
<dbReference type="PathwayCommons" id="Q13356"/>
<dbReference type="Reactome" id="R-HSA-210991">
    <property type="pathway name" value="Basigin interactions"/>
</dbReference>
<dbReference type="Reactome" id="R-HSA-72163">
    <property type="pathway name" value="mRNA Splicing - Major Pathway"/>
</dbReference>
<dbReference type="SignaLink" id="Q13356"/>
<dbReference type="UniPathway" id="UPA00143"/>
<dbReference type="BioGRID-ORCS" id="23759">
    <property type="hits" value="793 hits in 1212 CRISPR screens"/>
</dbReference>
<dbReference type="ChiTaRS" id="PPIL2">
    <property type="organism name" value="human"/>
</dbReference>
<dbReference type="EvolutionaryTrace" id="Q13356"/>
<dbReference type="GeneWiki" id="PPIL2"/>
<dbReference type="GenomeRNAi" id="23759"/>
<dbReference type="Pharos" id="Q13356">
    <property type="development level" value="Tbio"/>
</dbReference>
<dbReference type="PRO" id="PR:Q13356"/>
<dbReference type="Proteomes" id="UP000005640">
    <property type="component" value="Chromosome 22"/>
</dbReference>
<dbReference type="RNAct" id="Q13356">
    <property type="molecule type" value="protein"/>
</dbReference>
<dbReference type="Bgee" id="ENSG00000100023">
    <property type="expression patterns" value="Expressed in right lobe of thyroid gland and 189 other cell types or tissues"/>
</dbReference>
<dbReference type="ExpressionAtlas" id="Q13356">
    <property type="expression patterns" value="baseline and differential"/>
</dbReference>
<dbReference type="GO" id="GO:0071013">
    <property type="term" value="C:catalytic step 2 spliceosome"/>
    <property type="evidence" value="ECO:0000318"/>
    <property type="project" value="GO_Central"/>
</dbReference>
<dbReference type="GO" id="GO:0005737">
    <property type="term" value="C:cytoplasm"/>
    <property type="evidence" value="ECO:0000314"/>
    <property type="project" value="UniProtKB"/>
</dbReference>
<dbReference type="GO" id="GO:0005796">
    <property type="term" value="C:Golgi lumen"/>
    <property type="evidence" value="ECO:0000304"/>
    <property type="project" value="Reactome"/>
</dbReference>
<dbReference type="GO" id="GO:0005654">
    <property type="term" value="C:nucleoplasm"/>
    <property type="evidence" value="ECO:0000314"/>
    <property type="project" value="HPA"/>
</dbReference>
<dbReference type="GO" id="GO:0005634">
    <property type="term" value="C:nucleus"/>
    <property type="evidence" value="ECO:0000314"/>
    <property type="project" value="UniProtKB"/>
</dbReference>
<dbReference type="GO" id="GO:0005886">
    <property type="term" value="C:plasma membrane"/>
    <property type="evidence" value="ECO:0000314"/>
    <property type="project" value="UniProtKB"/>
</dbReference>
<dbReference type="GO" id="GO:0061630">
    <property type="term" value="F:ubiquitin protein ligase activity"/>
    <property type="evidence" value="ECO:0000314"/>
    <property type="project" value="MGI"/>
</dbReference>
<dbReference type="GO" id="GO:0034450">
    <property type="term" value="F:ubiquitin-ubiquitin ligase activity"/>
    <property type="evidence" value="ECO:0000314"/>
    <property type="project" value="MGI"/>
</dbReference>
<dbReference type="GO" id="GO:0006397">
    <property type="term" value="P:mRNA processing"/>
    <property type="evidence" value="ECO:0007669"/>
    <property type="project" value="UniProtKB-KW"/>
</dbReference>
<dbReference type="GO" id="GO:0006457">
    <property type="term" value="P:protein folding"/>
    <property type="evidence" value="ECO:0000318"/>
    <property type="project" value="GO_Central"/>
</dbReference>
<dbReference type="GO" id="GO:0072659">
    <property type="term" value="P:protein localization to plasma membrane"/>
    <property type="evidence" value="ECO:0000315"/>
    <property type="project" value="UniProtKB"/>
</dbReference>
<dbReference type="GO" id="GO:0000209">
    <property type="term" value="P:protein polyubiquitination"/>
    <property type="evidence" value="ECO:0000314"/>
    <property type="project" value="MGI"/>
</dbReference>
<dbReference type="GO" id="GO:0008380">
    <property type="term" value="P:RNA splicing"/>
    <property type="evidence" value="ECO:0007669"/>
    <property type="project" value="UniProtKB-KW"/>
</dbReference>
<dbReference type="CDD" id="cd01923">
    <property type="entry name" value="cyclophilin_RING"/>
    <property type="match status" value="1"/>
</dbReference>
<dbReference type="CDD" id="cd16663">
    <property type="entry name" value="RING-Ubox_PPIL2"/>
    <property type="match status" value="1"/>
</dbReference>
<dbReference type="FunFam" id="3.30.40.10:FF:000079">
    <property type="entry name" value="Peptidyl-prolyl cis-trans isomerase 2"/>
    <property type="match status" value="1"/>
</dbReference>
<dbReference type="FunFam" id="2.40.100.10:FF:000018">
    <property type="entry name" value="Peptidyl-prolyl cis-trans isomerase-like 2"/>
    <property type="match status" value="1"/>
</dbReference>
<dbReference type="Gene3D" id="2.40.100.10">
    <property type="entry name" value="Cyclophilin-like"/>
    <property type="match status" value="1"/>
</dbReference>
<dbReference type="Gene3D" id="1.20.5.460">
    <property type="entry name" value="Single helix bin"/>
    <property type="match status" value="1"/>
</dbReference>
<dbReference type="Gene3D" id="3.30.40.10">
    <property type="entry name" value="Zinc/RING finger domain, C3HC4 (zinc finger)"/>
    <property type="match status" value="1"/>
</dbReference>
<dbReference type="InterPro" id="IPR029000">
    <property type="entry name" value="Cyclophilin-like_dom_sf"/>
</dbReference>
<dbReference type="InterPro" id="IPR020892">
    <property type="entry name" value="Cyclophilin-type_PPIase_CS"/>
</dbReference>
<dbReference type="InterPro" id="IPR002130">
    <property type="entry name" value="Cyclophilin-type_PPIase_dom"/>
</dbReference>
<dbReference type="InterPro" id="IPR044666">
    <property type="entry name" value="Cyclophilin_A-like"/>
</dbReference>
<dbReference type="InterPro" id="IPR026951">
    <property type="entry name" value="PPIL2_U-box_dom"/>
</dbReference>
<dbReference type="InterPro" id="IPR003613">
    <property type="entry name" value="Ubox_domain"/>
</dbReference>
<dbReference type="InterPro" id="IPR013083">
    <property type="entry name" value="Znf_RING/FYVE/PHD"/>
</dbReference>
<dbReference type="PANTHER" id="PTHR45625">
    <property type="entry name" value="PEPTIDYL-PROLYL CIS-TRANS ISOMERASE-RELATED"/>
    <property type="match status" value="1"/>
</dbReference>
<dbReference type="PANTHER" id="PTHR45625:SF1">
    <property type="entry name" value="RING-TYPE E3 UBIQUITIN-PROTEIN LIGASE PPIL2"/>
    <property type="match status" value="1"/>
</dbReference>
<dbReference type="Pfam" id="PF00160">
    <property type="entry name" value="Pro_isomerase"/>
    <property type="match status" value="1"/>
</dbReference>
<dbReference type="PRINTS" id="PR00153">
    <property type="entry name" value="CSAPPISMRASE"/>
</dbReference>
<dbReference type="SMART" id="SM00504">
    <property type="entry name" value="Ubox"/>
    <property type="match status" value="1"/>
</dbReference>
<dbReference type="SUPFAM" id="SSF50891">
    <property type="entry name" value="Cyclophilin-like"/>
    <property type="match status" value="1"/>
</dbReference>
<dbReference type="SUPFAM" id="SSF57850">
    <property type="entry name" value="RING/U-box"/>
    <property type="match status" value="1"/>
</dbReference>
<dbReference type="PROSITE" id="PS00170">
    <property type="entry name" value="CSA_PPIASE_1"/>
    <property type="match status" value="1"/>
</dbReference>
<dbReference type="PROSITE" id="PS50072">
    <property type="entry name" value="CSA_PPIASE_2"/>
    <property type="match status" value="1"/>
</dbReference>
<dbReference type="PROSITE" id="PS51698">
    <property type="entry name" value="U_BOX"/>
    <property type="match status" value="1"/>
</dbReference>
<accession>Q13356</accession>
<accession>Q13357</accession>
<accession>Q8TAH2</accession>
<accession>Q9BWR8</accession>
<feature type="chain" id="PRO_0000064171" description="RING-type E3 ubiquitin-protein ligase PPIL2">
    <location>
        <begin position="1"/>
        <end position="520"/>
    </location>
</feature>
<feature type="domain" description="U-box">
    <location>
        <begin position="35"/>
        <end position="108"/>
    </location>
</feature>
<feature type="domain" description="PPIase cyclophilin-type" evidence="2">
    <location>
        <begin position="278"/>
        <end position="433"/>
    </location>
</feature>
<feature type="region of interest" description="Disordered" evidence="3">
    <location>
        <begin position="456"/>
        <end position="520"/>
    </location>
</feature>
<feature type="coiled-coil region" evidence="1">
    <location>
        <begin position="197"/>
        <end position="217"/>
    </location>
</feature>
<feature type="compositionally biased region" description="Low complexity" evidence="3">
    <location>
        <begin position="463"/>
        <end position="474"/>
    </location>
</feature>
<feature type="modified residue" description="Phosphoserine" evidence="20">
    <location>
        <position position="470"/>
    </location>
</feature>
<feature type="modified residue" description="N6-acetyllysine" evidence="19">
    <location>
        <position position="482"/>
    </location>
</feature>
<feature type="cross-link" description="Glycyl lysine isopeptide (Lys-Gly) (interchain with G-Cter in SUMO2)" evidence="21">
    <location>
        <position position="216"/>
    </location>
</feature>
<feature type="splice variant" id="VSP_005182" description="In isoform 2." evidence="11">
    <original>KRAAEEEPSTSATVPMSKKKPSRGFGDFSSW</original>
    <variation>EQQRKSPQPVPLSPCPRRSPVGVLGTSAPGSSRLPDDH</variation>
    <location>
        <begin position="490"/>
        <end position="520"/>
    </location>
</feature>
<feature type="mutagenesis site" description="No peptidyl-prolyl cis-trans isomerase activity; enables interaction with cyclosporin A." evidence="7">
    <original>Y</original>
    <variation>H</variation>
    <location>
        <position position="389"/>
    </location>
</feature>
<feature type="mutagenesis site" description="Gain of a peptidyl-prolyl cis-trans isomerase activity; enables interaction with cyclosporin A." evidence="7">
    <original>Y</original>
    <variation>W</variation>
    <location>
        <position position="389"/>
    </location>
</feature>
<feature type="sequence conflict" description="In Ref. 3; AAH28385." evidence="13" ref="3">
    <original>V</original>
    <variation>I</variation>
    <location>
        <position position="455"/>
    </location>
</feature>
<feature type="strand" evidence="23">
    <location>
        <begin position="7"/>
        <end position="9"/>
    </location>
</feature>
<feature type="helix" evidence="23">
    <location>
        <begin position="15"/>
        <end position="21"/>
    </location>
</feature>
<feature type="turn" evidence="23">
    <location>
        <begin position="43"/>
        <end position="45"/>
    </location>
</feature>
<feature type="strand" evidence="23">
    <location>
        <begin position="50"/>
        <end position="54"/>
    </location>
</feature>
<feature type="strand" evidence="23">
    <location>
        <begin position="60"/>
        <end position="62"/>
    </location>
</feature>
<feature type="helix" evidence="23">
    <location>
        <begin position="63"/>
        <end position="72"/>
    </location>
</feature>
<feature type="strand" evidence="23">
    <location>
        <begin position="73"/>
        <end position="75"/>
    </location>
</feature>
<feature type="strand" evidence="23">
    <location>
        <begin position="79"/>
        <end position="82"/>
    </location>
</feature>
<feature type="helix" evidence="23">
    <location>
        <begin position="85"/>
        <end position="87"/>
    </location>
</feature>
<feature type="strand" evidence="24">
    <location>
        <begin position="92"/>
        <end position="94"/>
    </location>
</feature>
<feature type="strand" evidence="23">
    <location>
        <begin position="97"/>
        <end position="99"/>
    </location>
</feature>
<feature type="turn" evidence="23">
    <location>
        <begin position="104"/>
        <end position="106"/>
    </location>
</feature>
<feature type="strand" evidence="24">
    <location>
        <begin position="112"/>
        <end position="114"/>
    </location>
</feature>
<feature type="strand" evidence="23">
    <location>
        <begin position="116"/>
        <end position="119"/>
    </location>
</feature>
<feature type="turn" evidence="23">
    <location>
        <begin position="120"/>
        <end position="122"/>
    </location>
</feature>
<feature type="strand" evidence="23">
    <location>
        <begin position="124"/>
        <end position="127"/>
    </location>
</feature>
<feature type="helix" evidence="23">
    <location>
        <begin position="128"/>
        <end position="135"/>
    </location>
</feature>
<feature type="strand" evidence="23">
    <location>
        <begin position="144"/>
        <end position="146"/>
    </location>
</feature>
<feature type="helix" evidence="23">
    <location>
        <begin position="152"/>
        <end position="154"/>
    </location>
</feature>
<feature type="strand" evidence="23">
    <location>
        <begin position="155"/>
        <end position="159"/>
    </location>
</feature>
<feature type="turn" evidence="24">
    <location>
        <begin position="193"/>
        <end position="196"/>
    </location>
</feature>
<feature type="helix" evidence="23">
    <location>
        <begin position="202"/>
        <end position="214"/>
    </location>
</feature>
<feature type="helix" evidence="23">
    <location>
        <begin position="220"/>
        <end position="224"/>
    </location>
</feature>
<feature type="helix" evidence="24">
    <location>
        <begin position="235"/>
        <end position="237"/>
    </location>
</feature>
<feature type="helix" evidence="23">
    <location>
        <begin position="245"/>
        <end position="251"/>
    </location>
</feature>
<feature type="strand" evidence="24">
    <location>
        <begin position="253"/>
        <end position="255"/>
    </location>
</feature>
<feature type="strand" evidence="22">
    <location>
        <begin position="280"/>
        <end position="286"/>
    </location>
</feature>
<feature type="strand" evidence="22">
    <location>
        <begin position="289"/>
        <end position="295"/>
    </location>
</feature>
<feature type="turn" evidence="22">
    <location>
        <begin position="297"/>
        <end position="299"/>
    </location>
</feature>
<feature type="helix" evidence="22">
    <location>
        <begin position="301"/>
        <end position="312"/>
    </location>
</feature>
<feature type="turn" evidence="22">
    <location>
        <begin position="313"/>
        <end position="318"/>
    </location>
</feature>
<feature type="strand" evidence="22">
    <location>
        <begin position="323"/>
        <end position="325"/>
    </location>
</feature>
<feature type="turn" evidence="22">
    <location>
        <begin position="326"/>
        <end position="328"/>
    </location>
</feature>
<feature type="strand" evidence="22">
    <location>
        <begin position="329"/>
        <end position="332"/>
    </location>
</feature>
<feature type="strand" evidence="24">
    <location>
        <begin position="334"/>
        <end position="336"/>
    </location>
</feature>
<feature type="strand" evidence="22">
    <location>
        <begin position="337"/>
        <end position="340"/>
    </location>
</feature>
<feature type="strand" evidence="23">
    <location>
        <begin position="345"/>
        <end position="348"/>
    </location>
</feature>
<feature type="strand" evidence="24">
    <location>
        <begin position="356"/>
        <end position="358"/>
    </location>
</feature>
<feature type="strand" evidence="22">
    <location>
        <begin position="365"/>
        <end position="368"/>
    </location>
</feature>
<feature type="strand" evidence="24">
    <location>
        <begin position="376"/>
        <end position="378"/>
    </location>
</feature>
<feature type="strand" evidence="22">
    <location>
        <begin position="380"/>
        <end position="385"/>
    </location>
</feature>
<feature type="helix" evidence="22">
    <location>
        <begin position="388"/>
        <end position="390"/>
    </location>
</feature>
<feature type="turn" evidence="22">
    <location>
        <begin position="391"/>
        <end position="393"/>
    </location>
</feature>
<feature type="strand" evidence="22">
    <location>
        <begin position="396"/>
        <end position="402"/>
    </location>
</feature>
<feature type="helix" evidence="22">
    <location>
        <begin position="404"/>
        <end position="412"/>
    </location>
</feature>
<feature type="turn" evidence="22">
    <location>
        <begin position="417"/>
        <end position="419"/>
    </location>
</feature>
<feature type="strand" evidence="22">
    <location>
        <begin position="422"/>
        <end position="424"/>
    </location>
</feature>
<feature type="strand" evidence="22">
    <location>
        <begin position="427"/>
        <end position="435"/>
    </location>
</feature>
<feature type="helix" evidence="22">
    <location>
        <begin position="439"/>
        <end position="455"/>
    </location>
</feature>
<sequence length="520" mass="58823">MGKRQHQKDKMYITCAEYTHFYGGKKPDLPQTNFRRLPFDHCSLSLQPFVYPVCTPDGIVFDLLNIVPWLKKYGTNPSNGEKLDGRSLIKLNFSKNSEGKYHCPVLFTVFTNNTHIVAVRTTGNVYAYEAVEQLNIKAKNFRDLLTDEPFSRQDIITLQDPTNLDKFNVSNFYHVKNNMKIIDPDEEKAKQDPSYYLKNTNAETRETLQELYKEFKGDEILAATMKAPEKKKVDKLNAAHYSTGKVSASFTSTAMVPETTHEAAAIDEDVLRYQFVKKKGYVRLHTNKGDLNLELHCDLTPKTCENFIRLCKKHYYDGTIFHRSIRNFVIQGGDPTGTGTGGESYWGKPFKDEFRPNLSHTGRGILSMANSGPNSNRSQFFITFRSCAYLDKKHTIFGRVVGGFDVLTAMENVESDPKTDRPKEEIRIDATTVFVDPYEEADAQIAQERKTQLKVAPETKVKSSQPQAGSQGPQTFRQGVGKYINPAATKRAAEEEPSTSATVPMSKKKPSRGFGDFSSW</sequence>
<protein>
    <recommendedName>
        <fullName evidence="13">RING-type E3 ubiquitin-protein ligase PPIL2</fullName>
        <ecNumber evidence="4">2.3.2.27</ecNumber>
    </recommendedName>
    <alternativeName>
        <fullName evidence="10">CYC4</fullName>
    </alternativeName>
    <alternativeName>
        <fullName evidence="12">Cyclophilin-60</fullName>
        <shortName evidence="12">Cyclophilin-like protein Cyp-60</shortName>
        <shortName evidence="12">Cyp60</shortName>
        <shortName evidence="12">hCyP-60</shortName>
    </alternativeName>
    <alternativeName>
        <fullName evidence="14">Probable inactive peptidyl-prolyl cis-trans isomerase-like 2</fullName>
        <shortName evidence="14">PPIase</shortName>
    </alternativeName>
    <alternativeName>
        <fullName evidence="13">Rotamase PPIL2</fullName>
    </alternativeName>
</protein>
<keyword id="KW-0002">3D-structure</keyword>
<keyword id="KW-0007">Acetylation</keyword>
<keyword id="KW-0025">Alternative splicing</keyword>
<keyword id="KW-0175">Coiled coil</keyword>
<keyword id="KW-1017">Isopeptide bond</keyword>
<keyword id="KW-0507">mRNA processing</keyword>
<keyword id="KW-0508">mRNA splicing</keyword>
<keyword id="KW-0539">Nucleus</keyword>
<keyword id="KW-0597">Phosphoprotein</keyword>
<keyword id="KW-1267">Proteomics identification</keyword>
<keyword id="KW-1185">Reference proteome</keyword>
<keyword id="KW-0747">Spliceosome</keyword>
<keyword id="KW-0808">Transferase</keyword>
<keyword id="KW-0832">Ubl conjugation</keyword>
<keyword id="KW-0833">Ubl conjugation pathway</keyword>
<evidence type="ECO:0000255" key="1"/>
<evidence type="ECO:0000255" key="2">
    <source>
        <dbReference type="PROSITE-ProRule" id="PRU00156"/>
    </source>
</evidence>
<evidence type="ECO:0000256" key="3">
    <source>
        <dbReference type="SAM" id="MobiDB-lite"/>
    </source>
</evidence>
<evidence type="ECO:0000269" key="4">
    <source>
    </source>
</evidence>
<evidence type="ECO:0000269" key="5">
    <source>
    </source>
</evidence>
<evidence type="ECO:0000269" key="6">
    <source>
    </source>
</evidence>
<evidence type="ECO:0000269" key="7">
    <source>
    </source>
</evidence>
<evidence type="ECO:0000269" key="8">
    <source>
    </source>
</evidence>
<evidence type="ECO:0000269" key="9">
    <source>
    </source>
</evidence>
<evidence type="ECO:0000303" key="10">
    <source>
    </source>
</evidence>
<evidence type="ECO:0000303" key="11">
    <source>
    </source>
</evidence>
<evidence type="ECO:0000303" key="12">
    <source>
    </source>
</evidence>
<evidence type="ECO:0000305" key="13"/>
<evidence type="ECO:0000305" key="14">
    <source>
    </source>
</evidence>
<evidence type="ECO:0000305" key="15">
    <source>
    </source>
</evidence>
<evidence type="ECO:0000312" key="16">
    <source>
        <dbReference type="HGNC" id="HGNC:9261"/>
    </source>
</evidence>
<evidence type="ECO:0007744" key="17">
    <source>
        <dbReference type="PDB" id="1ZKC"/>
    </source>
</evidence>
<evidence type="ECO:0007744" key="18">
    <source>
        <dbReference type="PDB" id="7DVQ"/>
    </source>
</evidence>
<evidence type="ECO:0007744" key="19">
    <source>
    </source>
</evidence>
<evidence type="ECO:0007744" key="20">
    <source>
    </source>
</evidence>
<evidence type="ECO:0007744" key="21">
    <source>
    </source>
</evidence>
<evidence type="ECO:0007829" key="22">
    <source>
        <dbReference type="PDB" id="1ZKC"/>
    </source>
</evidence>
<evidence type="ECO:0007829" key="23">
    <source>
        <dbReference type="PDB" id="7DVQ"/>
    </source>
</evidence>
<evidence type="ECO:0007829" key="24">
    <source>
        <dbReference type="PDB" id="7QTT"/>
    </source>
</evidence>
<proteinExistence type="evidence at protein level"/>
<comment type="function">
    <text evidence="4 6 7 15">Has a ubiquitin-protein ligase activity acting as an E3 ubiquitin protein ligase or as an ubiquitin-ubiquitin ligase promoting elongation of ubiquitin chains on substrates. By mediating 'Lys-48'-linked polyubiquitination of proteins could target them for proteasomal degradation (PubMed:11435423). May also function as a chaperone, playing a role in transport to the cell membrane of BSG/Basigin for instance (PubMed:15946952). Probable inactive PPIase with no peptidyl-prolyl cis-trans isomerase activity (PubMed:20676357). As a component of the minor spliceosome, involved in the splicing of U12-type introns in pre-mRNAs (Probable).</text>
</comment>
<comment type="catalytic activity">
    <reaction evidence="4">
        <text>S-ubiquitinyl-[E2 ubiquitin-conjugating enzyme]-L-cysteine + [acceptor protein]-L-lysine = [E2 ubiquitin-conjugating enzyme]-L-cysteine + N(6)-ubiquitinyl-[acceptor protein]-L-lysine.</text>
        <dbReference type="EC" id="2.3.2.27"/>
    </reaction>
</comment>
<comment type="pathway">
    <text evidence="4">Protein modification; protein ubiquitination.</text>
</comment>
<comment type="subunit">
    <text evidence="5 6 8">Component of the minor spliceosome, which splices U12-type introns. Within this complex, interacts with PRPF8/PRP8, EFTUD2/SNU114 and PLRG1 (PubMed:33509932). Interacts with isoform 2 of BSG (PubMed:15946952). Interacts (via the PPIase cyclophilin-type domain) with CRNKL1; they may form a trimeric complex with HSP90.</text>
</comment>
<comment type="interaction">
    <interactant intactId="EBI-7705988">
        <id>Q13356</id>
    </interactant>
    <interactant intactId="EBI-723230">
        <id>Q5QP82</id>
        <label>DCAF10</label>
    </interactant>
    <organismsDiffer>false</organismsDiffer>
    <experiments>3</experiments>
</comment>
<comment type="interaction">
    <interactant intactId="EBI-7705988">
        <id>Q13356</id>
    </interactant>
    <interactant intactId="EBI-740098">
        <id>P36406</id>
        <label>TRIM23</label>
    </interactant>
    <organismsDiffer>false</organismsDiffer>
    <experiments>3</experiments>
</comment>
<comment type="interaction">
    <interactant intactId="EBI-7705988">
        <id>Q13356</id>
    </interactant>
    <interactant intactId="EBI-3920997">
        <id>Q96NB3</id>
        <label>ZNF830</label>
    </interactant>
    <organismsDiffer>false</organismsDiffer>
    <experiments>3</experiments>
</comment>
<comment type="subcellular location">
    <subcellularLocation>
        <location evidence="4 9">Nucleus</location>
    </subcellularLocation>
    <text evidence="6">May also localize to the cytoplasm and the cell membrane.</text>
</comment>
<comment type="alternative products">
    <event type="alternative splicing"/>
    <isoform>
        <id>Q13356-1</id>
        <name>1</name>
        <sequence type="displayed"/>
    </isoform>
    <isoform>
        <id>Q13356-2</id>
        <name>2</name>
        <sequence type="described" ref="VSP_005182"/>
    </isoform>
</comment>
<comment type="tissue specificity">
    <text evidence="4 9">Highest expression in thymus, pancreas and testis. Also detected in heart, placenta, lung, liver, skeletal muscle, kidney, spleen, prostate, ovary, small intestine and colon. Poorly detected in brain and leukocytes. Strong protein expression in lymph node (cortical, paracortical and medullar regions), thyroid (follicular epithelial cells), testis (developing spermatozoa), stomach (cells lining the gastric pit), pancreas, kidney (proximal and distal-tubule cells and collecting duct cells but not in glomeruli), endometrium and colon (goblet cells). Moderate protein expression in spleen, prostate (epithelium and squamous cell carcinomas), placenta and adrenal gland. Weak protein expression in liver, heart, breast, ovary, and lung. No protein expression in brain and bladder. High protein expression in most lymphomas and melanomas.</text>
</comment>
<comment type="similarity">
    <text evidence="13">Belongs to the cyclophilin-type PPIase family. PPIL2 subfamily.</text>
</comment>
<comment type="caution">
    <text evidence="7">Despite the fact that it belongs to the cyclophilin-type PPIase family, a report has shown that it has probably no peptidyl-prolyl cis-trans isomerase activity due to the presence of a tyrosine instead of a tryptophan at position 389.</text>
</comment>
<gene>
    <name evidence="16" type="primary">PPIL2</name>
</gene>